<protein>
    <recommendedName>
        <fullName evidence="1">UPF0173 metal-dependent hydrolase RL2074</fullName>
    </recommendedName>
</protein>
<name>Y2074_RHIJ3</name>
<accession>Q1MHJ7</accession>
<comment type="similarity">
    <text evidence="1">Belongs to the UPF0173 family.</text>
</comment>
<sequence>MKITWLGHSAFRIETSKAKILLDPFLSYNASFSGQDIKDVSAGITHILLTHGHGDHVGDTVALAKETGAVVLANADLAAWLGSKGVDKIEMGNTGGTIALGSFSATFTNALHSSAQITEDGVSHALGNANGLMLHFDDEASILAMGDTDIFSDMALINELHQPDIGFVPVGDRFTMGGAVAALACRRYFNFKTAIPCHYGTFPIIDQTAEKFVAGMDGSKTDVKAIRPSESLSI</sequence>
<keyword id="KW-0378">Hydrolase</keyword>
<reference key="1">
    <citation type="journal article" date="2006" name="Genome Biol.">
        <title>The genome of Rhizobium leguminosarum has recognizable core and accessory components.</title>
        <authorList>
            <person name="Young J.P.W."/>
            <person name="Crossman L.C."/>
            <person name="Johnston A.W.B."/>
            <person name="Thomson N.R."/>
            <person name="Ghazoui Z.F."/>
            <person name="Hull K.H."/>
            <person name="Wexler M."/>
            <person name="Curson A.R.J."/>
            <person name="Todd J.D."/>
            <person name="Poole P.S."/>
            <person name="Mauchline T.H."/>
            <person name="East A.K."/>
            <person name="Quail M.A."/>
            <person name="Churcher C."/>
            <person name="Arrowsmith C."/>
            <person name="Cherevach I."/>
            <person name="Chillingworth T."/>
            <person name="Clarke K."/>
            <person name="Cronin A."/>
            <person name="Davis P."/>
            <person name="Fraser A."/>
            <person name="Hance Z."/>
            <person name="Hauser H."/>
            <person name="Jagels K."/>
            <person name="Moule S."/>
            <person name="Mungall K."/>
            <person name="Norbertczak H."/>
            <person name="Rabbinowitsch E."/>
            <person name="Sanders M."/>
            <person name="Simmonds M."/>
            <person name="Whitehead S."/>
            <person name="Parkhill J."/>
        </authorList>
    </citation>
    <scope>NUCLEOTIDE SEQUENCE [LARGE SCALE GENOMIC DNA]</scope>
    <source>
        <strain>DSM 114642 / LMG 32736 / 3841</strain>
    </source>
</reference>
<dbReference type="EMBL" id="AM236080">
    <property type="protein sequence ID" value="CAK07566.1"/>
    <property type="molecule type" value="Genomic_DNA"/>
</dbReference>
<dbReference type="RefSeq" id="WP_011651680.1">
    <property type="nucleotide sequence ID" value="NC_008380.1"/>
</dbReference>
<dbReference type="SMR" id="Q1MHJ7"/>
<dbReference type="EnsemblBacteria" id="CAK07566">
    <property type="protein sequence ID" value="CAK07566"/>
    <property type="gene ID" value="RL2074"/>
</dbReference>
<dbReference type="KEGG" id="rle:RL2074"/>
<dbReference type="eggNOG" id="COG2220">
    <property type="taxonomic scope" value="Bacteria"/>
</dbReference>
<dbReference type="HOGENOM" id="CLU_070010_4_0_5"/>
<dbReference type="Proteomes" id="UP000006575">
    <property type="component" value="Chromosome"/>
</dbReference>
<dbReference type="GO" id="GO:0016787">
    <property type="term" value="F:hydrolase activity"/>
    <property type="evidence" value="ECO:0007669"/>
    <property type="project" value="UniProtKB-UniRule"/>
</dbReference>
<dbReference type="CDD" id="cd06262">
    <property type="entry name" value="metallo-hydrolase-like_MBL-fold"/>
    <property type="match status" value="1"/>
</dbReference>
<dbReference type="Gene3D" id="3.60.15.10">
    <property type="entry name" value="Ribonuclease Z/Hydroxyacylglutathione hydrolase-like"/>
    <property type="match status" value="1"/>
</dbReference>
<dbReference type="HAMAP" id="MF_00457">
    <property type="entry name" value="UPF0173"/>
    <property type="match status" value="1"/>
</dbReference>
<dbReference type="InterPro" id="IPR001279">
    <property type="entry name" value="Metallo-B-lactamas"/>
</dbReference>
<dbReference type="InterPro" id="IPR036866">
    <property type="entry name" value="RibonucZ/Hydroxyglut_hydro"/>
</dbReference>
<dbReference type="InterPro" id="IPR022877">
    <property type="entry name" value="UPF0173"/>
</dbReference>
<dbReference type="InterPro" id="IPR050114">
    <property type="entry name" value="UPF0173_UPF0282_UlaG_hydrolase"/>
</dbReference>
<dbReference type="NCBIfam" id="NF001911">
    <property type="entry name" value="PRK00685.1"/>
    <property type="match status" value="1"/>
</dbReference>
<dbReference type="PANTHER" id="PTHR43546:SF3">
    <property type="entry name" value="UPF0173 METAL-DEPENDENT HYDROLASE MJ1163"/>
    <property type="match status" value="1"/>
</dbReference>
<dbReference type="PANTHER" id="PTHR43546">
    <property type="entry name" value="UPF0173 METAL-DEPENDENT HYDROLASE MJ1163-RELATED"/>
    <property type="match status" value="1"/>
</dbReference>
<dbReference type="Pfam" id="PF12706">
    <property type="entry name" value="Lactamase_B_2"/>
    <property type="match status" value="1"/>
</dbReference>
<dbReference type="SMART" id="SM00849">
    <property type="entry name" value="Lactamase_B"/>
    <property type="match status" value="1"/>
</dbReference>
<dbReference type="SUPFAM" id="SSF56281">
    <property type="entry name" value="Metallo-hydrolase/oxidoreductase"/>
    <property type="match status" value="1"/>
</dbReference>
<feature type="chain" id="PRO_0000367205" description="UPF0173 metal-dependent hydrolase RL2074">
    <location>
        <begin position="1"/>
        <end position="234"/>
    </location>
</feature>
<gene>
    <name type="ordered locus">RL2074</name>
</gene>
<evidence type="ECO:0000255" key="1">
    <source>
        <dbReference type="HAMAP-Rule" id="MF_00457"/>
    </source>
</evidence>
<organism>
    <name type="scientific">Rhizobium johnstonii (strain DSM 114642 / LMG 32736 / 3841)</name>
    <name type="common">Rhizobium leguminosarum bv. viciae</name>
    <dbReference type="NCBI Taxonomy" id="216596"/>
    <lineage>
        <taxon>Bacteria</taxon>
        <taxon>Pseudomonadati</taxon>
        <taxon>Pseudomonadota</taxon>
        <taxon>Alphaproteobacteria</taxon>
        <taxon>Hyphomicrobiales</taxon>
        <taxon>Rhizobiaceae</taxon>
        <taxon>Rhizobium/Agrobacterium group</taxon>
        <taxon>Rhizobium</taxon>
        <taxon>Rhizobium johnstonii</taxon>
    </lineage>
</organism>
<proteinExistence type="inferred from homology"/>